<evidence type="ECO:0000250" key="1"/>
<evidence type="ECO:0000255" key="2"/>
<evidence type="ECO:0000269" key="3">
    <source>
    </source>
</evidence>
<evidence type="ECO:0000269" key="4">
    <source>
    </source>
</evidence>
<evidence type="ECO:0000305" key="5"/>
<evidence type="ECO:0007829" key="6">
    <source>
        <dbReference type="PDB" id="6HZ2"/>
    </source>
</evidence>
<reference key="1">
    <citation type="journal article" date="2005" name="Eur. J. Immunol.">
        <title>Variety of antimicrobial peptides in the Bombina maxima toad and evidence of their rapid diversification.</title>
        <authorList>
            <person name="Lee W.-H."/>
            <person name="Li Y."/>
            <person name="Lai R."/>
            <person name="Li S."/>
            <person name="Zhang Y."/>
            <person name="Wang W."/>
        </authorList>
    </citation>
    <scope>NUCLEOTIDE SEQUENCE [MRNA]</scope>
    <scope>PROTEIN SEQUENCE OF 44-70 AND 124-143</scope>
    <scope>AMIDATION AT ILE-143</scope>
    <scope>MASS SPECTROMETRY</scope>
    <source>
        <tissue>Skin</tissue>
    </source>
</reference>
<reference key="2">
    <citation type="journal article" date="2002" name="Peptides">
        <title>Antimicrobial peptides from skin secretions of Chinese red belly toad Bombina maxima.</title>
        <authorList>
            <person name="Lai R."/>
            <person name="Zheng Y.-T."/>
            <person name="Shen J.-H."/>
            <person name="Liu G.-J."/>
            <person name="Liu H."/>
            <person name="Lee W.-H."/>
            <person name="Tang S.-Z."/>
            <person name="Zhang Y."/>
        </authorList>
    </citation>
    <scope>PROTEIN SEQUENCE OF 44-70</scope>
    <scope>MASS SPECTROMETRY</scope>
    <scope>FUNCTION OF MAXIMIN-3</scope>
</reference>
<accession>Q58T64</accession>
<protein>
    <recommendedName>
        <fullName>Maximins 3/H11 type 2</fullName>
    </recommendedName>
    <component>
        <recommendedName>
            <fullName>Maximin-3</fullName>
        </recommendedName>
    </component>
    <component>
        <recommendedName>
            <fullName>Maximin-H11</fullName>
        </recommendedName>
    </component>
</protein>
<feature type="signal peptide" evidence="2">
    <location>
        <begin position="1"/>
        <end position="18"/>
    </location>
</feature>
<feature type="propeptide" id="PRO_0000003144" evidence="3">
    <location>
        <begin position="19"/>
        <end position="43"/>
    </location>
</feature>
<feature type="peptide" id="PRO_0000003145" description="Maximin-3">
    <location>
        <begin position="44"/>
        <end position="70"/>
    </location>
</feature>
<feature type="propeptide" id="PRO_0000003146" evidence="1">
    <location>
        <begin position="73"/>
        <end position="122"/>
    </location>
</feature>
<feature type="peptide" id="PRO_0000003147" description="Maximin-H11">
    <location>
        <begin position="124"/>
        <end position="143"/>
    </location>
</feature>
<feature type="modified residue" description="Isoleucine amide" evidence="4">
    <location>
        <position position="143"/>
    </location>
</feature>
<feature type="helix" evidence="6">
    <location>
        <begin position="46"/>
        <end position="58"/>
    </location>
</feature>
<feature type="helix" evidence="6">
    <location>
        <begin position="60"/>
        <end position="63"/>
    </location>
</feature>
<feature type="helix" evidence="6">
    <location>
        <begin position="66"/>
        <end position="69"/>
    </location>
</feature>
<sequence length="144" mass="16060">MHFKYIVAVSFLIASAYARSVQNDEQSLSQRDVLEEESLREIRGIGGKILSGLKTALKGAAKELASTYLHRKRTAEEHEVMKRLEAIMRDLDSLDYPEEASERETRGFNQDKIANLFTKKEKRILGPVLGLVGSALGGLIKKIG</sequence>
<keyword id="KW-0002">3D-structure</keyword>
<keyword id="KW-0027">Amidation</keyword>
<keyword id="KW-0878">Amphibian defense peptide</keyword>
<keyword id="KW-0044">Antibiotic</keyword>
<keyword id="KW-0929">Antimicrobial</keyword>
<keyword id="KW-0165">Cleavage on pair of basic residues</keyword>
<keyword id="KW-0204">Cytolysis</keyword>
<keyword id="KW-0903">Direct protein sequencing</keyword>
<keyword id="KW-0295">Fungicide</keyword>
<keyword id="KW-0354">Hemolysis</keyword>
<keyword id="KW-0964">Secreted</keyword>
<keyword id="KW-0732">Signal</keyword>
<dbReference type="EMBL" id="AY848996">
    <property type="protein sequence ID" value="AAX50217.1"/>
    <property type="molecule type" value="mRNA"/>
</dbReference>
<dbReference type="PDB" id="6HZ2">
    <property type="method" value="NMR"/>
    <property type="chains" value="A=44-70"/>
</dbReference>
<dbReference type="PDBsum" id="6HZ2"/>
<dbReference type="BMRB" id="Q58T64"/>
<dbReference type="SMR" id="Q58T64"/>
<dbReference type="GO" id="GO:0005576">
    <property type="term" value="C:extracellular region"/>
    <property type="evidence" value="ECO:0007669"/>
    <property type="project" value="UniProtKB-SubCell"/>
</dbReference>
<dbReference type="GO" id="GO:0042742">
    <property type="term" value="P:defense response to bacterium"/>
    <property type="evidence" value="ECO:0007669"/>
    <property type="project" value="UniProtKB-KW"/>
</dbReference>
<dbReference type="GO" id="GO:0050832">
    <property type="term" value="P:defense response to fungus"/>
    <property type="evidence" value="ECO:0007669"/>
    <property type="project" value="UniProtKB-KW"/>
</dbReference>
<dbReference type="GO" id="GO:0031640">
    <property type="term" value="P:killing of cells of another organism"/>
    <property type="evidence" value="ECO:0007669"/>
    <property type="project" value="UniProtKB-KW"/>
</dbReference>
<dbReference type="InterPro" id="IPR007962">
    <property type="entry name" value="Bombinin"/>
</dbReference>
<dbReference type="Pfam" id="PF05298">
    <property type="entry name" value="Bombinin"/>
    <property type="match status" value="1"/>
</dbReference>
<comment type="function">
    <text evidence="3">Maximin-3 shows antibacterial activity against both Gram-positive and Gram-negative bacteria. It also shows antimicrobial activity against the fungus C.albicans, but not against A.flavus nor P.uticale. It has little hemolytic activity. It possess a significant cytotoxicity against tumor cell lines. It possess a significant anti-HIV activity. It shows high spermicidal activity.</text>
</comment>
<comment type="function">
    <text evidence="1">Maximin-H11 shows antimicrobial activity against bacteria and against the fungus C.albicans. Shows strong hemolytic activity (By similarity).</text>
</comment>
<comment type="subcellular location">
    <subcellularLocation>
        <location>Secreted</location>
    </subcellularLocation>
</comment>
<comment type="tissue specificity">
    <text>Expressed by the skin glands.</text>
</comment>
<comment type="mass spectrometry" mass="2698.0" method="FAB" evidence="3">
    <molecule>Maximin-3</molecule>
</comment>
<comment type="similarity">
    <text evidence="5">Belongs to the bombinin family.</text>
</comment>
<name>M3112_BOMMX</name>
<organism>
    <name type="scientific">Bombina maxima</name>
    <name type="common">Giant fire-bellied toad</name>
    <name type="synonym">Chinese red belly toad</name>
    <dbReference type="NCBI Taxonomy" id="161274"/>
    <lineage>
        <taxon>Eukaryota</taxon>
        <taxon>Metazoa</taxon>
        <taxon>Chordata</taxon>
        <taxon>Craniata</taxon>
        <taxon>Vertebrata</taxon>
        <taxon>Euteleostomi</taxon>
        <taxon>Amphibia</taxon>
        <taxon>Batrachia</taxon>
        <taxon>Anura</taxon>
        <taxon>Bombinatoridae</taxon>
        <taxon>Bombina</taxon>
    </lineage>
</organism>
<proteinExistence type="evidence at protein level"/>